<proteinExistence type="evidence at protein level"/>
<accession>Q9FMD7</accession>
<sequence length="625" mass="67463">MKNKTNLGLSVFFFFICLVSVTSDLEADRRALIALRDGVHGRPLLWNLTAPPCTWGGVQCESGRVTALRLPGVGLSGPLPIAIGNLTKLETLSFRFNALNGPLPPDFANLTLLRYLYLQGNAFSGEIPSFLFTLPNIIRINLAQNNFLGRIPDNVNSATRLATLYLQDNQLTGPIPEIKIKLQQFNVSSNQLNGSIPDPLSGMPKTAFLGNLLCGKPLDACPVNGTGNGTVTPGGKGKSDKLSAGAIVGIVIGCFVLLLVLFLIVFCLCRKKKKEQVVQSRSIEAAPVPTSSAAVAKESNGPPAVVANGASENGVSKNPAAVSKDLTFFVKSFGEFDLDGLLKASAEVLGKGTFGSSYKASFDHGLVVAVKRLRDVVVPEKEFREKLQVLGSISHANLVTLIAYYFSRDEKLVVFEYMSRGSLSALLHGNKGSGRSPLNWETRANIALGAARAISYLHSRDATTSHGNIKSSNILLSESFEAKVSDYCLAPMISPTSTPNRIDGYRAPEVTDARKISQKADVYSFGVLILELLTGKSPTHQQLHEEGVDLPRWVSSITEQQSPSDVFDPELTRYQSDSNENMIRLLNIGISCTTQYPDSRPTMPEVTRLIEEVSRSPASPGPLSD</sequence>
<dbReference type="EMBL" id="AB008270">
    <property type="protein sequence ID" value="BAB10186.1"/>
    <property type="molecule type" value="Genomic_DNA"/>
</dbReference>
<dbReference type="EMBL" id="CP002688">
    <property type="protein sequence ID" value="AED92314.1"/>
    <property type="molecule type" value="Genomic_DNA"/>
</dbReference>
<dbReference type="EMBL" id="AK228885">
    <property type="protein sequence ID" value="BAF00775.1"/>
    <property type="molecule type" value="mRNA"/>
</dbReference>
<dbReference type="EMBL" id="BT011691">
    <property type="protein sequence ID" value="AAS49054.1"/>
    <property type="molecule type" value="mRNA"/>
</dbReference>
<dbReference type="EMBL" id="BT012270">
    <property type="protein sequence ID" value="AAS76757.1"/>
    <property type="molecule type" value="mRNA"/>
</dbReference>
<dbReference type="RefSeq" id="NP_197162.1">
    <property type="nucleotide sequence ID" value="NM_121665.4"/>
</dbReference>
<dbReference type="SMR" id="Q9FMD7"/>
<dbReference type="BioGRID" id="16797">
    <property type="interactions" value="96"/>
</dbReference>
<dbReference type="FunCoup" id="Q9FMD7">
    <property type="interactions" value="18"/>
</dbReference>
<dbReference type="IntAct" id="Q9FMD7">
    <property type="interactions" value="87"/>
</dbReference>
<dbReference type="STRING" id="3702.Q9FMD7"/>
<dbReference type="GlyGen" id="Q9FMD7">
    <property type="glycosylation" value="1 site"/>
</dbReference>
<dbReference type="iPTMnet" id="Q9FMD7"/>
<dbReference type="SwissPalm" id="Q9FMD7"/>
<dbReference type="PaxDb" id="3702-AT5G16590.1"/>
<dbReference type="ProteomicsDB" id="243022"/>
<dbReference type="EnsemblPlants" id="AT5G16590.1">
    <property type="protein sequence ID" value="AT5G16590.1"/>
    <property type="gene ID" value="AT5G16590"/>
</dbReference>
<dbReference type="GeneID" id="831521"/>
<dbReference type="Gramene" id="AT5G16590.1">
    <property type="protein sequence ID" value="AT5G16590.1"/>
    <property type="gene ID" value="AT5G16590"/>
</dbReference>
<dbReference type="KEGG" id="ath:AT5G16590"/>
<dbReference type="Araport" id="AT5G16590"/>
<dbReference type="TAIR" id="AT5G16590">
    <property type="gene designation" value="LRR1"/>
</dbReference>
<dbReference type="eggNOG" id="ENOG502QSFF">
    <property type="taxonomic scope" value="Eukaryota"/>
</dbReference>
<dbReference type="HOGENOM" id="CLU_000288_92_6_1"/>
<dbReference type="InParanoid" id="Q9FMD7"/>
<dbReference type="OMA" id="DSRPTMP"/>
<dbReference type="OrthoDB" id="652551at2759"/>
<dbReference type="PhylomeDB" id="Q9FMD7"/>
<dbReference type="PRO" id="PR:Q9FMD7"/>
<dbReference type="Proteomes" id="UP000006548">
    <property type="component" value="Chromosome 5"/>
</dbReference>
<dbReference type="ExpressionAtlas" id="Q9FMD7">
    <property type="expression patterns" value="baseline and differential"/>
</dbReference>
<dbReference type="GO" id="GO:0009505">
    <property type="term" value="C:plant-type cell wall"/>
    <property type="evidence" value="ECO:0007005"/>
    <property type="project" value="TAIR"/>
</dbReference>
<dbReference type="GO" id="GO:0005886">
    <property type="term" value="C:plasma membrane"/>
    <property type="evidence" value="ECO:0000314"/>
    <property type="project" value="TAIR"/>
</dbReference>
<dbReference type="GO" id="GO:0009506">
    <property type="term" value="C:plasmodesma"/>
    <property type="evidence" value="ECO:0007005"/>
    <property type="project" value="TAIR"/>
</dbReference>
<dbReference type="GO" id="GO:0009536">
    <property type="term" value="C:plastid"/>
    <property type="evidence" value="ECO:0007005"/>
    <property type="project" value="TAIR"/>
</dbReference>
<dbReference type="GO" id="GO:0005524">
    <property type="term" value="F:ATP binding"/>
    <property type="evidence" value="ECO:0007669"/>
    <property type="project" value="UniProtKB-KW"/>
</dbReference>
<dbReference type="GO" id="GO:0004672">
    <property type="term" value="F:protein kinase activity"/>
    <property type="evidence" value="ECO:0007669"/>
    <property type="project" value="InterPro"/>
</dbReference>
<dbReference type="GO" id="GO:0009610">
    <property type="term" value="P:response to symbiotic fungus"/>
    <property type="evidence" value="ECO:0000270"/>
    <property type="project" value="TAIR"/>
</dbReference>
<dbReference type="FunFam" id="3.30.200.20:FF:000307">
    <property type="entry name" value="pollen receptor-like kinase 1"/>
    <property type="match status" value="1"/>
</dbReference>
<dbReference type="FunFam" id="1.10.510.10:FF:000585">
    <property type="entry name" value="Probable inactive receptor kinase At1g48480"/>
    <property type="match status" value="1"/>
</dbReference>
<dbReference type="FunFam" id="3.80.10.10:FF:000234">
    <property type="entry name" value="Probable inactive receptor kinase RLK902"/>
    <property type="match status" value="1"/>
</dbReference>
<dbReference type="Gene3D" id="3.30.200.20">
    <property type="entry name" value="Phosphorylase Kinase, domain 1"/>
    <property type="match status" value="1"/>
</dbReference>
<dbReference type="Gene3D" id="3.80.10.10">
    <property type="entry name" value="Ribonuclease Inhibitor"/>
    <property type="match status" value="2"/>
</dbReference>
<dbReference type="Gene3D" id="1.10.510.10">
    <property type="entry name" value="Transferase(Phosphotransferase) domain 1"/>
    <property type="match status" value="1"/>
</dbReference>
<dbReference type="InterPro" id="IPR050994">
    <property type="entry name" value="At_inactive_RLKs"/>
</dbReference>
<dbReference type="InterPro" id="IPR011009">
    <property type="entry name" value="Kinase-like_dom_sf"/>
</dbReference>
<dbReference type="InterPro" id="IPR001611">
    <property type="entry name" value="Leu-rich_rpt"/>
</dbReference>
<dbReference type="InterPro" id="IPR032675">
    <property type="entry name" value="LRR_dom_sf"/>
</dbReference>
<dbReference type="InterPro" id="IPR013210">
    <property type="entry name" value="LRR_N_plant-typ"/>
</dbReference>
<dbReference type="InterPro" id="IPR000719">
    <property type="entry name" value="Prot_kinase_dom"/>
</dbReference>
<dbReference type="InterPro" id="IPR001245">
    <property type="entry name" value="Ser-Thr/Tyr_kinase_cat_dom"/>
</dbReference>
<dbReference type="PANTHER" id="PTHR48010:SF38">
    <property type="entry name" value="GENOME ASSEMBLY, CHROMOSOME: A02"/>
    <property type="match status" value="1"/>
</dbReference>
<dbReference type="PANTHER" id="PTHR48010">
    <property type="entry name" value="OS05G0588300 PROTEIN"/>
    <property type="match status" value="1"/>
</dbReference>
<dbReference type="Pfam" id="PF00560">
    <property type="entry name" value="LRR_1"/>
    <property type="match status" value="3"/>
</dbReference>
<dbReference type="Pfam" id="PF08263">
    <property type="entry name" value="LRRNT_2"/>
    <property type="match status" value="1"/>
</dbReference>
<dbReference type="Pfam" id="PF07714">
    <property type="entry name" value="PK_Tyr_Ser-Thr"/>
    <property type="match status" value="1"/>
</dbReference>
<dbReference type="SUPFAM" id="SSF52058">
    <property type="entry name" value="L domain-like"/>
    <property type="match status" value="1"/>
</dbReference>
<dbReference type="SUPFAM" id="SSF56112">
    <property type="entry name" value="Protein kinase-like (PK-like)"/>
    <property type="match status" value="1"/>
</dbReference>
<dbReference type="PROSITE" id="PS50011">
    <property type="entry name" value="PROTEIN_KINASE_DOM"/>
    <property type="match status" value="1"/>
</dbReference>
<organism>
    <name type="scientific">Arabidopsis thaliana</name>
    <name type="common">Mouse-ear cress</name>
    <dbReference type="NCBI Taxonomy" id="3702"/>
    <lineage>
        <taxon>Eukaryota</taxon>
        <taxon>Viridiplantae</taxon>
        <taxon>Streptophyta</taxon>
        <taxon>Embryophyta</taxon>
        <taxon>Tracheophyta</taxon>
        <taxon>Spermatophyta</taxon>
        <taxon>Magnoliopsida</taxon>
        <taxon>eudicotyledons</taxon>
        <taxon>Gunneridae</taxon>
        <taxon>Pentapetalae</taxon>
        <taxon>rosids</taxon>
        <taxon>malvids</taxon>
        <taxon>Brassicales</taxon>
        <taxon>Brassicaceae</taxon>
        <taxon>Camelineae</taxon>
        <taxon>Arabidopsis</taxon>
    </lineage>
</organism>
<gene>
    <name type="ordered locus">At5g16590</name>
    <name type="ORF">MTG13.3</name>
</gene>
<reference key="1">
    <citation type="journal article" date="1997" name="DNA Res.">
        <title>Structural analysis of Arabidopsis thaliana chromosome 5. III. Sequence features of the regions of 1,191,918 bp covered by seventeen physically assigned P1 clones.</title>
        <authorList>
            <person name="Nakamura Y."/>
            <person name="Sato S."/>
            <person name="Kaneko T."/>
            <person name="Kotani H."/>
            <person name="Asamizu E."/>
            <person name="Miyajima N."/>
            <person name="Tabata S."/>
        </authorList>
    </citation>
    <scope>NUCLEOTIDE SEQUENCE [LARGE SCALE GENOMIC DNA]</scope>
    <source>
        <strain>cv. Columbia</strain>
    </source>
</reference>
<reference key="2">
    <citation type="journal article" date="2017" name="Plant J.">
        <title>Araport11: a complete reannotation of the Arabidopsis thaliana reference genome.</title>
        <authorList>
            <person name="Cheng C.Y."/>
            <person name="Krishnakumar V."/>
            <person name="Chan A.P."/>
            <person name="Thibaud-Nissen F."/>
            <person name="Schobel S."/>
            <person name="Town C.D."/>
        </authorList>
    </citation>
    <scope>GENOME REANNOTATION</scope>
    <source>
        <strain>cv. Columbia</strain>
    </source>
</reference>
<reference key="3">
    <citation type="submission" date="2006-07" db="EMBL/GenBank/DDBJ databases">
        <title>Large-scale analysis of RIKEN Arabidopsis full-length (RAFL) cDNAs.</title>
        <authorList>
            <person name="Totoki Y."/>
            <person name="Seki M."/>
            <person name="Ishida J."/>
            <person name="Nakajima M."/>
            <person name="Enju A."/>
            <person name="Kamiya A."/>
            <person name="Narusaka M."/>
            <person name="Shin-i T."/>
            <person name="Nakagawa M."/>
            <person name="Sakamoto N."/>
            <person name="Oishi K."/>
            <person name="Kohara Y."/>
            <person name="Kobayashi M."/>
            <person name="Toyoda A."/>
            <person name="Sakaki Y."/>
            <person name="Sakurai T."/>
            <person name="Iida K."/>
            <person name="Akiyama K."/>
            <person name="Satou M."/>
            <person name="Toyoda T."/>
            <person name="Konagaya A."/>
            <person name="Carninci P."/>
            <person name="Kawai J."/>
            <person name="Hayashizaki Y."/>
            <person name="Shinozaki K."/>
        </authorList>
    </citation>
    <scope>NUCLEOTIDE SEQUENCE [LARGE SCALE MRNA]</scope>
    <source>
        <strain>cv. Columbia</strain>
    </source>
</reference>
<reference key="4">
    <citation type="submission" date="2004-03" db="EMBL/GenBank/DDBJ databases">
        <title>Arabidopsis ORF clones.</title>
        <authorList>
            <person name="Cheuk R.F."/>
            <person name="Chen H."/>
            <person name="Kim C.J."/>
            <person name="Shinn P."/>
            <person name="Ecker J.R."/>
        </authorList>
    </citation>
    <scope>NUCLEOTIDE SEQUENCE [LARGE SCALE MRNA]</scope>
    <source>
        <strain>cv. Columbia</strain>
    </source>
</reference>
<reference key="5">
    <citation type="journal article" date="2003" name="Mol. Cell. Proteomics">
        <title>Large-scale analysis of in vivo phosphorylated membrane proteins by immobilized metal ion affinity chromatography and mass spectrometry.</title>
        <authorList>
            <person name="Nuehse T.S."/>
            <person name="Stensballe A."/>
            <person name="Jensen O.N."/>
            <person name="Peck S.C."/>
        </authorList>
    </citation>
    <scope>PHOSPHORYLATION [LARGE SCALE ANALYSIS] AT SER-619 AND SER-624</scope>
    <scope>IDENTIFICATION BY MASS SPECTROMETRY [LARGE SCALE ANALYSIS]</scope>
    <source>
        <strain>cv. La-0</strain>
    </source>
</reference>
<reference key="6">
    <citation type="journal article" date="2004" name="Plant Cell">
        <title>Phosphoproteomics of the Arabidopsis plasma membrane and a new phosphorylation site database.</title>
        <authorList>
            <person name="Nuehse T.S."/>
            <person name="Stensballe A."/>
            <person name="Jensen O.N."/>
            <person name="Peck S.C."/>
        </authorList>
    </citation>
    <scope>PHOSPHORYLATION [LARGE SCALE ANALYSIS] AT SER-619 AND SER-624</scope>
    <scope>IDENTIFICATION BY MASS SPECTROMETRY [LARGE SCALE ANALYSIS]</scope>
</reference>
<reference key="7">
    <citation type="journal article" date="2005" name="J. Plant Physiol.">
        <title>Expression of a receptor kinase in Arabidopsis roots is stimulated by the basidiomycete Piriformospora indica and the protein accumulates in Triton X-100 insoluble plasma membrane microdomains.</title>
        <authorList>
            <person name="Shahollari B."/>
            <person name="Varma A."/>
            <person name="Oelmueller R."/>
        </authorList>
    </citation>
    <scope>IDENTIFICATION BY MASS SPECTROMETRY</scope>
    <scope>INDUCTION</scope>
    <scope>SUBCELLULAR LOCATION</scope>
</reference>
<reference key="8">
    <citation type="journal article" date="2007" name="Plant J.">
        <title>A leucine-rich repeat protein is required for growth promotion and enhanced seed production mediated by the endophytic fungus Piriformospora indica in Arabidopsis thaliana.</title>
        <authorList>
            <person name="Shahollari B."/>
            <person name="Vadassery J."/>
            <person name="Varma A."/>
            <person name="Oelmueller R."/>
        </authorList>
    </citation>
    <scope>FUNCTION</scope>
    <scope>SUBCELLULAR LOCATION</scope>
    <scope>INDUCTION</scope>
</reference>
<reference key="9">
    <citation type="journal article" date="2009" name="Plant Physiol.">
        <title>Large-scale Arabidopsis phosphoproteome profiling reveals novel chloroplast kinase substrates and phosphorylation networks.</title>
        <authorList>
            <person name="Reiland S."/>
            <person name="Messerli G."/>
            <person name="Baerenfaller K."/>
            <person name="Gerrits B."/>
            <person name="Endler A."/>
            <person name="Grossmann J."/>
            <person name="Gruissem W."/>
            <person name="Baginsky S."/>
        </authorList>
    </citation>
    <scope>PHOSPHORYLATION [LARGE SCALE ANALYSIS] AT SER-624</scope>
    <scope>IDENTIFICATION BY MASS SPECTROMETRY [LARGE SCALE ANALYSIS]</scope>
</reference>
<comment type="function">
    <text evidence="6">Might be involved in early recognition of growth promoting fungi. Appears to be specific for P.indica.</text>
</comment>
<comment type="interaction">
    <interactant intactId="EBI-16903983">
        <id>Q9FMD7</id>
    </interactant>
    <interactant intactId="EBI-20654598">
        <id>F4I065</id>
        <label>At1g49100</label>
    </interactant>
    <organismsDiffer>false</organismsDiffer>
    <experiments>2</experiments>
</comment>
<comment type="interaction">
    <interactant intactId="EBI-16903983">
        <id>Q9FMD7</id>
    </interactant>
    <interactant intactId="EBI-20657656">
        <id>C0LGH8</id>
        <label>At1g63430</label>
    </interactant>
    <organismsDiffer>false</organismsDiffer>
    <experiments>3</experiments>
</comment>
<comment type="interaction">
    <interactant intactId="EBI-16903983">
        <id>Q9FMD7</id>
    </interactant>
    <interactant intactId="EBI-20657109">
        <id>Q9M2R4</id>
        <label>T10K17.40</label>
    </interactant>
    <organismsDiffer>false</organismsDiffer>
    <experiments>3</experiments>
</comment>
<comment type="interaction">
    <interactant intactId="EBI-16903983">
        <id>Q9FMD7</id>
    </interactant>
    <interactant intactId="EBI-2023970">
        <id>P43298</id>
        <label>TMK1</label>
    </interactant>
    <organismsDiffer>false</organismsDiffer>
    <experiments>2</experiments>
</comment>
<comment type="subcellular location">
    <subcellularLocation>
        <location evidence="5 6">Cell membrane</location>
        <topology evidence="5 6">Single-pass membrane protein</topology>
    </subcellularLocation>
</comment>
<comment type="induction">
    <text evidence="5 6">Transiently up-regulated by the endophytic fungus Piriformospora indica.</text>
</comment>
<comment type="domain">
    <text>The protein kinase domain is predicted to be catalytically inactive.</text>
</comment>
<comment type="miscellaneous">
    <text>Induction of At5g16590 is not observed in mutants devoid of PII-2, another leucine-rich repeat protein normally associated with the plasma membrane microdomains.</text>
</comment>
<comment type="similarity">
    <text evidence="4">Belongs to the protein kinase superfamily. Ser/Thr protein kinase family.</text>
</comment>
<name>Y5659_ARATH</name>
<feature type="signal peptide" evidence="3">
    <location>
        <begin position="1"/>
        <end position="23"/>
    </location>
</feature>
<feature type="chain" id="PRO_0000317071" description="Probable inactive receptor kinase At5g16590">
    <location>
        <begin position="24"/>
        <end position="625"/>
    </location>
</feature>
<feature type="transmembrane region" description="Helical" evidence="3">
    <location>
        <begin position="246"/>
        <end position="266"/>
    </location>
</feature>
<feature type="repeat" description="LRR 1">
    <location>
        <begin position="88"/>
        <end position="111"/>
    </location>
</feature>
<feature type="repeat" description="LRR 2">
    <location>
        <begin position="112"/>
        <end position="134"/>
    </location>
</feature>
<feature type="repeat" description="LRR 3">
    <location>
        <begin position="136"/>
        <end position="158"/>
    </location>
</feature>
<feature type="repeat" description="LRR 4">
    <location>
        <begin position="160"/>
        <end position="182"/>
    </location>
</feature>
<feature type="repeat" description="LRR 5">
    <location>
        <begin position="183"/>
        <end position="204"/>
    </location>
</feature>
<feature type="domain" description="Protein kinase" evidence="4">
    <location>
        <begin position="343"/>
        <end position="613"/>
    </location>
</feature>
<feature type="binding site" evidence="4">
    <location>
        <begin position="349"/>
        <end position="357"/>
    </location>
    <ligand>
        <name>ATP</name>
        <dbReference type="ChEBI" id="CHEBI:30616"/>
    </ligand>
</feature>
<feature type="binding site" evidence="4">
    <location>
        <position position="371"/>
    </location>
    <ligand>
        <name>ATP</name>
        <dbReference type="ChEBI" id="CHEBI:30616"/>
    </ligand>
</feature>
<feature type="modified residue" description="Phosphoserine" evidence="2">
    <location>
        <position position="345"/>
    </location>
</feature>
<feature type="modified residue" description="Phosphoserine" evidence="1">
    <location>
        <position position="422"/>
    </location>
</feature>
<feature type="modified residue" description="Phosphothreonine" evidence="1">
    <location>
        <position position="442"/>
    </location>
</feature>
<feature type="modified residue" description="Phosphothreonine" evidence="2">
    <location>
        <position position="496"/>
    </location>
</feature>
<feature type="modified residue" description="Phosphoserine" evidence="1">
    <location>
        <position position="517"/>
    </location>
</feature>
<feature type="modified residue" description="Phosphothreonine" evidence="1">
    <location>
        <position position="593"/>
    </location>
</feature>
<feature type="modified residue" description="Phosphoserine" evidence="7 8">
    <location>
        <position position="619"/>
    </location>
</feature>
<feature type="modified residue" description="Phosphoserine" evidence="7 8 9">
    <location>
        <position position="624"/>
    </location>
</feature>
<protein>
    <recommendedName>
        <fullName>Probable inactive receptor kinase At5g16590</fullName>
    </recommendedName>
</protein>
<keyword id="KW-0067">ATP-binding</keyword>
<keyword id="KW-1003">Cell membrane</keyword>
<keyword id="KW-0433">Leucine-rich repeat</keyword>
<keyword id="KW-0472">Membrane</keyword>
<keyword id="KW-0547">Nucleotide-binding</keyword>
<keyword id="KW-0597">Phosphoprotein</keyword>
<keyword id="KW-0675">Receptor</keyword>
<keyword id="KW-1185">Reference proteome</keyword>
<keyword id="KW-0677">Repeat</keyword>
<keyword id="KW-0732">Signal</keyword>
<keyword id="KW-0812">Transmembrane</keyword>
<keyword id="KW-1133">Transmembrane helix</keyword>
<evidence type="ECO:0000250" key="1">
    <source>
        <dbReference type="UniProtKB" id="Q94AG2"/>
    </source>
</evidence>
<evidence type="ECO:0000250" key="2">
    <source>
        <dbReference type="UniProtKB" id="Q94F62"/>
    </source>
</evidence>
<evidence type="ECO:0000255" key="3"/>
<evidence type="ECO:0000255" key="4">
    <source>
        <dbReference type="PROSITE-ProRule" id="PRU00159"/>
    </source>
</evidence>
<evidence type="ECO:0000269" key="5">
    <source>
    </source>
</evidence>
<evidence type="ECO:0000269" key="6">
    <source>
    </source>
</evidence>
<evidence type="ECO:0007744" key="7">
    <source>
    </source>
</evidence>
<evidence type="ECO:0007744" key="8">
    <source>
    </source>
</evidence>
<evidence type="ECO:0007744" key="9">
    <source>
    </source>
</evidence>